<sequence>MSDIEQRVKQAVAEQLGIKAEEIKNEASFMDDLGADSLDLVELVMSFENDFDITIPDEDSNEITTVQSAIDYVTKKLG</sequence>
<reference key="1">
    <citation type="journal article" date="2004" name="Nucleic Acids Res.">
        <title>Unique features revealed by the genome sequence of Acinetobacter sp. ADP1, a versatile and naturally transformation competent bacterium.</title>
        <authorList>
            <person name="Barbe V."/>
            <person name="Vallenet D."/>
            <person name="Fonknechten N."/>
            <person name="Kreimeyer A."/>
            <person name="Oztas S."/>
            <person name="Labarre L."/>
            <person name="Cruveiller S."/>
            <person name="Robert C."/>
            <person name="Duprat S."/>
            <person name="Wincker P."/>
            <person name="Ornston L.N."/>
            <person name="Weissenbach J."/>
            <person name="Marliere P."/>
            <person name="Cohen G.N."/>
            <person name="Medigue C."/>
        </authorList>
    </citation>
    <scope>NUCLEOTIDE SEQUENCE [LARGE SCALE GENOMIC DNA]</scope>
    <source>
        <strain>ATCC 33305 / BD413 / ADP1</strain>
    </source>
</reference>
<organism>
    <name type="scientific">Acinetobacter baylyi (strain ATCC 33305 / BD413 / ADP1)</name>
    <dbReference type="NCBI Taxonomy" id="62977"/>
    <lineage>
        <taxon>Bacteria</taxon>
        <taxon>Pseudomonadati</taxon>
        <taxon>Pseudomonadota</taxon>
        <taxon>Gammaproteobacteria</taxon>
        <taxon>Moraxellales</taxon>
        <taxon>Moraxellaceae</taxon>
        <taxon>Acinetobacter</taxon>
    </lineage>
</organism>
<evidence type="ECO:0000255" key="1">
    <source>
        <dbReference type="HAMAP-Rule" id="MF_01217"/>
    </source>
</evidence>
<evidence type="ECO:0000255" key="2">
    <source>
        <dbReference type="PROSITE-ProRule" id="PRU00258"/>
    </source>
</evidence>
<evidence type="ECO:0000305" key="3"/>
<feature type="chain" id="PRO_0000180088" description="Acyl carrier protein">
    <location>
        <begin position="1"/>
        <end position="78"/>
    </location>
</feature>
<feature type="domain" description="Carrier" evidence="2">
    <location>
        <begin position="2"/>
        <end position="77"/>
    </location>
</feature>
<feature type="modified residue" description="O-(pantetheine 4'-phosphoryl)serine" evidence="2">
    <location>
        <position position="37"/>
    </location>
</feature>
<gene>
    <name evidence="1" type="primary">acpP</name>
    <name type="ordered locus">ACIAD0872</name>
</gene>
<keyword id="KW-0963">Cytoplasm</keyword>
<keyword id="KW-0275">Fatty acid biosynthesis</keyword>
<keyword id="KW-0276">Fatty acid metabolism</keyword>
<keyword id="KW-0444">Lipid biosynthesis</keyword>
<keyword id="KW-0443">Lipid metabolism</keyword>
<keyword id="KW-0596">Phosphopantetheine</keyword>
<keyword id="KW-0597">Phosphoprotein</keyword>
<accession>Q6FDT7</accession>
<comment type="function">
    <text evidence="1">Carrier of the growing fatty acid chain in fatty acid biosynthesis.</text>
</comment>
<comment type="pathway">
    <text evidence="1">Lipid metabolism; fatty acid biosynthesis.</text>
</comment>
<comment type="subcellular location">
    <subcellularLocation>
        <location evidence="1">Cytoplasm</location>
    </subcellularLocation>
</comment>
<comment type="PTM">
    <text evidence="1">4'-phosphopantetheine is transferred from CoA to a specific serine of apo-ACP by AcpS. This modification is essential for activity because fatty acids are bound in thioester linkage to the sulfhydryl of the prosthetic group.</text>
</comment>
<comment type="similarity">
    <text evidence="1">Belongs to the acyl carrier protein (ACP) family.</text>
</comment>
<comment type="sequence caution" evidence="3">
    <conflict type="erroneous initiation">
        <sequence resource="EMBL-CDS" id="CAG67771"/>
    </conflict>
</comment>
<name>ACP_ACIAD</name>
<dbReference type="EMBL" id="CR543861">
    <property type="protein sequence ID" value="CAG67771.1"/>
    <property type="status" value="ALT_INIT"/>
    <property type="molecule type" value="Genomic_DNA"/>
</dbReference>
<dbReference type="RefSeq" id="WP_004922143.1">
    <property type="nucleotide sequence ID" value="NC_005966.1"/>
</dbReference>
<dbReference type="SMR" id="Q6FDT7"/>
<dbReference type="STRING" id="202950.GCA_001485005_02621"/>
<dbReference type="GeneID" id="45233333"/>
<dbReference type="KEGG" id="aci:ACIAD0872"/>
<dbReference type="eggNOG" id="COG0236">
    <property type="taxonomic scope" value="Bacteria"/>
</dbReference>
<dbReference type="HOGENOM" id="CLU_108696_5_1_6"/>
<dbReference type="OrthoDB" id="9804551at2"/>
<dbReference type="BioCyc" id="ASP62977:ACIAD_RS04025-MONOMER"/>
<dbReference type="UniPathway" id="UPA00094"/>
<dbReference type="Proteomes" id="UP000000430">
    <property type="component" value="Chromosome"/>
</dbReference>
<dbReference type="GO" id="GO:0005829">
    <property type="term" value="C:cytosol"/>
    <property type="evidence" value="ECO:0007669"/>
    <property type="project" value="TreeGrafter"/>
</dbReference>
<dbReference type="GO" id="GO:0016020">
    <property type="term" value="C:membrane"/>
    <property type="evidence" value="ECO:0007669"/>
    <property type="project" value="GOC"/>
</dbReference>
<dbReference type="GO" id="GO:0000035">
    <property type="term" value="F:acyl binding"/>
    <property type="evidence" value="ECO:0007669"/>
    <property type="project" value="TreeGrafter"/>
</dbReference>
<dbReference type="GO" id="GO:0000036">
    <property type="term" value="F:acyl carrier activity"/>
    <property type="evidence" value="ECO:0007669"/>
    <property type="project" value="UniProtKB-UniRule"/>
</dbReference>
<dbReference type="GO" id="GO:0009245">
    <property type="term" value="P:lipid A biosynthetic process"/>
    <property type="evidence" value="ECO:0007669"/>
    <property type="project" value="TreeGrafter"/>
</dbReference>
<dbReference type="FunFam" id="1.10.1200.10:FF:000001">
    <property type="entry name" value="Acyl carrier protein"/>
    <property type="match status" value="1"/>
</dbReference>
<dbReference type="Gene3D" id="1.10.1200.10">
    <property type="entry name" value="ACP-like"/>
    <property type="match status" value="1"/>
</dbReference>
<dbReference type="HAMAP" id="MF_01217">
    <property type="entry name" value="Acyl_carrier"/>
    <property type="match status" value="1"/>
</dbReference>
<dbReference type="InterPro" id="IPR003231">
    <property type="entry name" value="ACP"/>
</dbReference>
<dbReference type="InterPro" id="IPR036736">
    <property type="entry name" value="ACP-like_sf"/>
</dbReference>
<dbReference type="InterPro" id="IPR009081">
    <property type="entry name" value="PP-bd_ACP"/>
</dbReference>
<dbReference type="InterPro" id="IPR006162">
    <property type="entry name" value="Ppantetheine_attach_site"/>
</dbReference>
<dbReference type="NCBIfam" id="TIGR00517">
    <property type="entry name" value="acyl_carrier"/>
    <property type="match status" value="1"/>
</dbReference>
<dbReference type="NCBIfam" id="NF002148">
    <property type="entry name" value="PRK00982.1-2"/>
    <property type="match status" value="1"/>
</dbReference>
<dbReference type="NCBIfam" id="NF002149">
    <property type="entry name" value="PRK00982.1-3"/>
    <property type="match status" value="1"/>
</dbReference>
<dbReference type="NCBIfam" id="NF002150">
    <property type="entry name" value="PRK00982.1-4"/>
    <property type="match status" value="1"/>
</dbReference>
<dbReference type="NCBIfam" id="NF002151">
    <property type="entry name" value="PRK00982.1-5"/>
    <property type="match status" value="1"/>
</dbReference>
<dbReference type="PANTHER" id="PTHR20863">
    <property type="entry name" value="ACYL CARRIER PROTEIN"/>
    <property type="match status" value="1"/>
</dbReference>
<dbReference type="PANTHER" id="PTHR20863:SF76">
    <property type="entry name" value="CARRIER DOMAIN-CONTAINING PROTEIN"/>
    <property type="match status" value="1"/>
</dbReference>
<dbReference type="Pfam" id="PF00550">
    <property type="entry name" value="PP-binding"/>
    <property type="match status" value="1"/>
</dbReference>
<dbReference type="SUPFAM" id="SSF47336">
    <property type="entry name" value="ACP-like"/>
    <property type="match status" value="1"/>
</dbReference>
<dbReference type="PROSITE" id="PS50075">
    <property type="entry name" value="CARRIER"/>
    <property type="match status" value="1"/>
</dbReference>
<dbReference type="PROSITE" id="PS00012">
    <property type="entry name" value="PHOSPHOPANTETHEINE"/>
    <property type="match status" value="1"/>
</dbReference>
<proteinExistence type="inferred from homology"/>
<protein>
    <recommendedName>
        <fullName evidence="1">Acyl carrier protein</fullName>
        <shortName evidence="1">ACP</shortName>
    </recommendedName>
</protein>